<comment type="function">
    <text evidence="1">One of the early assembly proteins it binds 23S rRNA. One of the proteins that surrounds the polypeptide exit tunnel on the outside of the ribosome. Forms the main docking site for trigger factor binding to the ribosome.</text>
</comment>
<comment type="subunit">
    <text evidence="1">Part of the 50S ribosomal subunit. Contacts protein L29, and trigger factor when it is bound to the ribosome.</text>
</comment>
<comment type="similarity">
    <text evidence="1">Belongs to the universal ribosomal protein uL23 family.</text>
</comment>
<feature type="chain" id="PRO_1000068148" description="Large ribosomal subunit protein uL23">
    <location>
        <begin position="1"/>
        <end position="98"/>
    </location>
</feature>
<keyword id="KW-0687">Ribonucleoprotein</keyword>
<keyword id="KW-0689">Ribosomal protein</keyword>
<keyword id="KW-0694">RNA-binding</keyword>
<keyword id="KW-0699">rRNA-binding</keyword>
<gene>
    <name evidence="1" type="primary">rplW</name>
    <name type="ordered locus">A1C_05095</name>
</gene>
<protein>
    <recommendedName>
        <fullName evidence="1">Large ribosomal subunit protein uL23</fullName>
    </recommendedName>
    <alternativeName>
        <fullName evidence="2">50S ribosomal protein L23</fullName>
    </alternativeName>
</protein>
<evidence type="ECO:0000255" key="1">
    <source>
        <dbReference type="HAMAP-Rule" id="MF_01369"/>
    </source>
</evidence>
<evidence type="ECO:0000305" key="2"/>
<organism>
    <name type="scientific">Rickettsia akari (strain Hartford)</name>
    <dbReference type="NCBI Taxonomy" id="293614"/>
    <lineage>
        <taxon>Bacteria</taxon>
        <taxon>Pseudomonadati</taxon>
        <taxon>Pseudomonadota</taxon>
        <taxon>Alphaproteobacteria</taxon>
        <taxon>Rickettsiales</taxon>
        <taxon>Rickettsiaceae</taxon>
        <taxon>Rickettsieae</taxon>
        <taxon>Rickettsia</taxon>
        <taxon>spotted fever group</taxon>
    </lineage>
</organism>
<reference key="1">
    <citation type="submission" date="2007-09" db="EMBL/GenBank/DDBJ databases">
        <title>Complete genome sequence of Rickettsia akari.</title>
        <authorList>
            <person name="Madan A."/>
            <person name="Fahey J."/>
            <person name="Helton E."/>
            <person name="Ketteman M."/>
            <person name="Madan A."/>
            <person name="Rodrigues S."/>
            <person name="Sanchez A."/>
            <person name="Whiting M."/>
            <person name="Dasch G."/>
            <person name="Eremeeva M."/>
        </authorList>
    </citation>
    <scope>NUCLEOTIDE SEQUENCE [LARGE SCALE GENOMIC DNA]</scope>
    <source>
        <strain>Hartford</strain>
    </source>
</reference>
<accession>A8GPE8</accession>
<proteinExistence type="inferred from homology"/>
<sequence length="98" mass="11329">MSSYKYYDLIRKPIITEKTTNISEQNKYAFYVDKFAKKLTVKKAIEEIFKVKVKKVNILNVKGKKKTFKGITGTQINRKKAIVTLEKDHNIDFAGGIK</sequence>
<name>RL23_RICAH</name>
<dbReference type="EMBL" id="CP000847">
    <property type="protein sequence ID" value="ABV75273.1"/>
    <property type="molecule type" value="Genomic_DNA"/>
</dbReference>
<dbReference type="RefSeq" id="WP_012149903.1">
    <property type="nucleotide sequence ID" value="NC_009881.1"/>
</dbReference>
<dbReference type="SMR" id="A8GPE8"/>
<dbReference type="STRING" id="293614.A1C_05095"/>
<dbReference type="KEGG" id="rak:A1C_05095"/>
<dbReference type="eggNOG" id="COG0089">
    <property type="taxonomic scope" value="Bacteria"/>
</dbReference>
<dbReference type="HOGENOM" id="CLU_037562_3_2_5"/>
<dbReference type="Proteomes" id="UP000006830">
    <property type="component" value="Chromosome"/>
</dbReference>
<dbReference type="GO" id="GO:1990904">
    <property type="term" value="C:ribonucleoprotein complex"/>
    <property type="evidence" value="ECO:0007669"/>
    <property type="project" value="UniProtKB-KW"/>
</dbReference>
<dbReference type="GO" id="GO:0005840">
    <property type="term" value="C:ribosome"/>
    <property type="evidence" value="ECO:0007669"/>
    <property type="project" value="UniProtKB-KW"/>
</dbReference>
<dbReference type="GO" id="GO:0019843">
    <property type="term" value="F:rRNA binding"/>
    <property type="evidence" value="ECO:0007669"/>
    <property type="project" value="UniProtKB-UniRule"/>
</dbReference>
<dbReference type="GO" id="GO:0003735">
    <property type="term" value="F:structural constituent of ribosome"/>
    <property type="evidence" value="ECO:0007669"/>
    <property type="project" value="InterPro"/>
</dbReference>
<dbReference type="GO" id="GO:0006412">
    <property type="term" value="P:translation"/>
    <property type="evidence" value="ECO:0007669"/>
    <property type="project" value="UniProtKB-UniRule"/>
</dbReference>
<dbReference type="FunFam" id="3.30.70.330:FF:000001">
    <property type="entry name" value="50S ribosomal protein L23"/>
    <property type="match status" value="1"/>
</dbReference>
<dbReference type="Gene3D" id="3.30.70.330">
    <property type="match status" value="1"/>
</dbReference>
<dbReference type="HAMAP" id="MF_01369_B">
    <property type="entry name" value="Ribosomal_uL23_B"/>
    <property type="match status" value="1"/>
</dbReference>
<dbReference type="InterPro" id="IPR012677">
    <property type="entry name" value="Nucleotide-bd_a/b_plait_sf"/>
</dbReference>
<dbReference type="InterPro" id="IPR013025">
    <property type="entry name" value="Ribosomal_uL23-like"/>
</dbReference>
<dbReference type="InterPro" id="IPR012678">
    <property type="entry name" value="Ribosomal_uL23/eL15/eS24_sf"/>
</dbReference>
<dbReference type="NCBIfam" id="NF004363">
    <property type="entry name" value="PRK05738.2-4"/>
    <property type="match status" value="1"/>
</dbReference>
<dbReference type="PANTHER" id="PTHR11620">
    <property type="entry name" value="60S RIBOSOMAL PROTEIN L23A"/>
    <property type="match status" value="1"/>
</dbReference>
<dbReference type="Pfam" id="PF00276">
    <property type="entry name" value="Ribosomal_L23"/>
    <property type="match status" value="1"/>
</dbReference>
<dbReference type="SUPFAM" id="SSF54189">
    <property type="entry name" value="Ribosomal proteins S24e, L23 and L15e"/>
    <property type="match status" value="1"/>
</dbReference>